<sequence>MKLETAYNYFEKLEKDERLQNYISQANSRYILYIANEPLENFPHYTVNLDEKCTHIAFSYLNCGWRFFLEKISDEATKCMEKASEILEYLYAYSDCEKLYKEYYRLVCSLAYYISAQYSKSFIILGKYNSDSYIGKITKLFLTRNFIELERQLEIKYLKNDEETSSENKDNIIYEKILSNAFLHIINFIRTGKMESLESSKDMVRDLITLADINNEPHMWWYFRLLYLVFEEYEDGSLWKVVPPLLDNDDISAKYIYANLYKKKPITEFFKSQRECLDGELLKNDGFVIGMPTSSGKTKVAEVTILKTLTKSPGALCIYIAPYRSLANEVEFSLSSMFEIMGYQVSQLYGGSQTSPLDRQLTKQANVIIVTPEKAKSMLRSNKDLKDRIQLVIIDEGHLVGFQPRYITGELLIEELKIVLKKNNGQLVLLSAVLPNISDFSLWIGEDDKAKRMSVWRPSSQRFGELSLARNTVNINWEGETPSYNKNFITPKLVKPERITKTGRKYAAKYFPADKKEGVAATATKMLDVGSVLIYVGRSNMVLSQARIVSKLFEEKGIEHEWRNKNDWLFVELACIEEYGEDSEILSLLKQGIVPHSSKLPTEVRQSIEKLMANDNPKIIIATSTLGQGVNIGVSTVIVSNVRLDESNTVKVNDFWNIAGRAGRAFTDTEGKILYAIDRNKSQWSIYNQIQMKEMYFKYRNIEKATSGLYLLLRYLFILSEEFEIEYSLFLELLAENRESIDEQKAVEFFSEADQFLELLDDTLISMDIMNEANVLENSSSWIDDVFRSSLAFIQAKQDQSFSEEKMIEILKARNSGVIKLAGEETKWHSIASSSVPLRASLVIEHRIDELLKYVRKYIDSDKSFEELLSLVMELDIFIDSLPISKIEGIEIGANFSEIREGWFSGTSIHILEKRHENVRSICNEYYSFHFPWIVNAIAQKIKLIDCQEESKVLEQISLFAEIGLNNNKSVKIYLAGIKSRNCATELSEKIGMDNDLVTPVKELLLEFFNLCVVKKEDCSEICFNWLKLLNDEKEAKEYVKVKRRSFQFNIPFDLHDNLLYIKKVQSEIWLCSFDYKIKIPVLKEKALFNECSDIPDIFLRKEKGDVWILDSHNPYIIFY</sequence>
<comment type="function">
    <text evidence="3 6">Component of antiviral defense system Hachiman, composed of HamA and HamB. Expression of Hachiman in B.subtilis (strain BEST7003) confers resistance to phages phi105, phi29, phi3T, rho14, SBSphiJ, SpBeta and SPR (PubMed:29371424). Probably a helicase (Probable).</text>
</comment>
<comment type="disruption phenotype">
    <text evidence="3">When this gene is missing the Hachiman system does not confer SpBeta resistance in B.subtilis.</text>
</comment>
<comment type="similarity">
    <text evidence="5">Belongs to the helicase family.</text>
</comment>
<evidence type="ECO:0000255" key="1">
    <source>
        <dbReference type="PROSITE-ProRule" id="PRU00541"/>
    </source>
</evidence>
<evidence type="ECO:0000255" key="2">
    <source>
        <dbReference type="PROSITE-ProRule" id="PRU00542"/>
    </source>
</evidence>
<evidence type="ECO:0000269" key="3">
    <source>
    </source>
</evidence>
<evidence type="ECO:0000303" key="4">
    <source>
    </source>
</evidence>
<evidence type="ECO:0000305" key="5"/>
<evidence type="ECO:0000305" key="6">
    <source>
    </source>
</evidence>
<evidence type="ECO:0000312" key="7">
    <source>
        <dbReference type="EMBL" id="KLA13162.1"/>
    </source>
</evidence>
<feature type="chain" id="PRO_0000456374" description="Hachiman protein HamB">
    <location>
        <begin position="1"/>
        <end position="1120"/>
    </location>
</feature>
<feature type="domain" description="Helicase ATP-binding" evidence="1">
    <location>
        <begin position="278"/>
        <end position="452"/>
    </location>
</feature>
<feature type="domain" description="Helicase C-terminal" evidence="2">
    <location>
        <begin position="521"/>
        <end position="710"/>
    </location>
</feature>
<feature type="short sequence motif" description="DEAH box" evidence="1">
    <location>
        <begin position="395"/>
        <end position="398"/>
    </location>
</feature>
<feature type="binding site" evidence="1">
    <location>
        <begin position="291"/>
        <end position="298"/>
    </location>
    <ligand>
        <name>ATP</name>
        <dbReference type="ChEBI" id="CHEBI:30616"/>
    </ligand>
</feature>
<reference key="1">
    <citation type="journal article" date="2015" name="Genome Announc.">
        <title>Next-Generation Whole-Genome Sequencing of Eight Strains of Bacillus cereus, Isolated from Food.</title>
        <authorList>
            <person name="Krawczyk A.O."/>
            <person name="de Jong A."/>
            <person name="Eijlander R.T."/>
            <person name="Berendsen E.M."/>
            <person name="Holsappel S."/>
            <person name="Wells-Bennik M.H."/>
            <person name="Kuipers O.P."/>
        </authorList>
    </citation>
    <scope>NUCLEOTIDE SEQUENCE [LARGE SCALE GENOMIC DNA]</scope>
    <source>
        <strain>B4087</strain>
    </source>
</reference>
<reference key="2">
    <citation type="journal article" date="2018" name="Science">
        <title>Systematic discovery of antiphage defense systems in the microbial pangenome.</title>
        <authorList>
            <person name="Doron S."/>
            <person name="Melamed S."/>
            <person name="Ofir G."/>
            <person name="Leavitt A."/>
            <person name="Lopatina A."/>
            <person name="Keren M."/>
            <person name="Amitai G."/>
            <person name="Sorek R."/>
        </authorList>
    </citation>
    <scope>FUNCTION</scope>
    <scope>DISRUPTION PHENOTYPE</scope>
    <scope>EXPRESSION IN B.SUBTILIS</scope>
    <source>
        <strain>B4087</strain>
    </source>
</reference>
<gene>
    <name evidence="4" type="primary">hamB</name>
    <name evidence="7" type="ORF">B4087_2532</name>
</gene>
<keyword id="KW-0051">Antiviral defense</keyword>
<keyword id="KW-0067">ATP-binding</keyword>
<keyword id="KW-0347">Helicase</keyword>
<keyword id="KW-0378">Hydrolase</keyword>
<keyword id="KW-0547">Nucleotide-binding</keyword>
<protein>
    <recommendedName>
        <fullName evidence="4">Hachiman protein HamB</fullName>
    </recommendedName>
    <alternativeName>
        <fullName evidence="4">Probable helicase HamB</fullName>
    </alternativeName>
</protein>
<name>HAMB_BACCE</name>
<dbReference type="EMBL" id="LCYM01000053">
    <property type="protein sequence ID" value="KLA13162.1"/>
    <property type="molecule type" value="Genomic_DNA"/>
</dbReference>
<dbReference type="SMR" id="P0DW40"/>
<dbReference type="GO" id="GO:0005524">
    <property type="term" value="F:ATP binding"/>
    <property type="evidence" value="ECO:0007669"/>
    <property type="project" value="UniProtKB-KW"/>
</dbReference>
<dbReference type="GO" id="GO:0004386">
    <property type="term" value="F:helicase activity"/>
    <property type="evidence" value="ECO:0007669"/>
    <property type="project" value="UniProtKB-KW"/>
</dbReference>
<dbReference type="GO" id="GO:0016787">
    <property type="term" value="F:hydrolase activity"/>
    <property type="evidence" value="ECO:0007669"/>
    <property type="project" value="UniProtKB-KW"/>
</dbReference>
<dbReference type="GO" id="GO:0003676">
    <property type="term" value="F:nucleic acid binding"/>
    <property type="evidence" value="ECO:0007669"/>
    <property type="project" value="InterPro"/>
</dbReference>
<dbReference type="GO" id="GO:0051607">
    <property type="term" value="P:defense response to virus"/>
    <property type="evidence" value="ECO:0007669"/>
    <property type="project" value="UniProtKB-KW"/>
</dbReference>
<dbReference type="CDD" id="cd17921">
    <property type="entry name" value="DEXHc_Ski2"/>
    <property type="match status" value="1"/>
</dbReference>
<dbReference type="Gene3D" id="3.40.50.300">
    <property type="entry name" value="P-loop containing nucleotide triphosphate hydrolases"/>
    <property type="match status" value="2"/>
</dbReference>
<dbReference type="InterPro" id="IPR011545">
    <property type="entry name" value="DEAD/DEAH_box_helicase_dom"/>
</dbReference>
<dbReference type="InterPro" id="IPR050474">
    <property type="entry name" value="Hel308_SKI2-like"/>
</dbReference>
<dbReference type="InterPro" id="IPR014001">
    <property type="entry name" value="Helicase_ATP-bd"/>
</dbReference>
<dbReference type="InterPro" id="IPR001650">
    <property type="entry name" value="Helicase_C-like"/>
</dbReference>
<dbReference type="InterPro" id="IPR027417">
    <property type="entry name" value="P-loop_NTPase"/>
</dbReference>
<dbReference type="PANTHER" id="PTHR47961">
    <property type="entry name" value="DNA POLYMERASE THETA, PUTATIVE (AFU_ORTHOLOGUE AFUA_1G05260)-RELATED"/>
    <property type="match status" value="1"/>
</dbReference>
<dbReference type="PANTHER" id="PTHR47961:SF6">
    <property type="entry name" value="DNA-DIRECTED DNA POLYMERASE"/>
    <property type="match status" value="1"/>
</dbReference>
<dbReference type="Pfam" id="PF00270">
    <property type="entry name" value="DEAD"/>
    <property type="match status" value="1"/>
</dbReference>
<dbReference type="Pfam" id="PF00271">
    <property type="entry name" value="Helicase_C"/>
    <property type="match status" value="1"/>
</dbReference>
<dbReference type="SMART" id="SM00487">
    <property type="entry name" value="DEXDc"/>
    <property type="match status" value="1"/>
</dbReference>
<dbReference type="SMART" id="SM00490">
    <property type="entry name" value="HELICc"/>
    <property type="match status" value="1"/>
</dbReference>
<dbReference type="SUPFAM" id="SSF52540">
    <property type="entry name" value="P-loop containing nucleoside triphosphate hydrolases"/>
    <property type="match status" value="1"/>
</dbReference>
<dbReference type="PROSITE" id="PS51192">
    <property type="entry name" value="HELICASE_ATP_BIND_1"/>
    <property type="match status" value="1"/>
</dbReference>
<dbReference type="PROSITE" id="PS51194">
    <property type="entry name" value="HELICASE_CTER"/>
    <property type="match status" value="1"/>
</dbReference>
<proteinExistence type="inferred from homology"/>
<accession>P0DW40</accession>
<organism>
    <name type="scientific">Bacillus cereus</name>
    <dbReference type="NCBI Taxonomy" id="1396"/>
    <lineage>
        <taxon>Bacteria</taxon>
        <taxon>Bacillati</taxon>
        <taxon>Bacillota</taxon>
        <taxon>Bacilli</taxon>
        <taxon>Bacillales</taxon>
        <taxon>Bacillaceae</taxon>
        <taxon>Bacillus</taxon>
        <taxon>Bacillus cereus group</taxon>
    </lineage>
</organism>